<accession>Q9L7M0</accession>
<evidence type="ECO:0000255" key="1">
    <source>
        <dbReference type="HAMAP-Rule" id="MF_00386"/>
    </source>
</evidence>
<organism>
    <name type="scientific">Mycolicibacterium paratuberculosis (strain ATCC BAA-968 / K-10)</name>
    <name type="common">Mycobacterium paratuberculosis</name>
    <dbReference type="NCBI Taxonomy" id="262316"/>
    <lineage>
        <taxon>Bacteria</taxon>
        <taxon>Bacillati</taxon>
        <taxon>Actinomycetota</taxon>
        <taxon>Actinomycetes</taxon>
        <taxon>Mycobacteriales</taxon>
        <taxon>Mycobacteriaceae</taxon>
        <taxon>Mycobacterium</taxon>
        <taxon>Mycobacterium avium complex (MAC)</taxon>
    </lineage>
</organism>
<comment type="function">
    <text evidence="1">Could be involved in insertion of integral membrane proteins into the membrane.</text>
</comment>
<comment type="subcellular location">
    <subcellularLocation>
        <location evidence="1">Cell membrane</location>
        <topology evidence="1">Peripheral membrane protein</topology>
        <orientation evidence="1">Cytoplasmic side</orientation>
    </subcellularLocation>
</comment>
<comment type="similarity">
    <text evidence="1">Belongs to the UPF0161 family.</text>
</comment>
<dbReference type="EMBL" id="AF222789">
    <property type="protein sequence ID" value="AAF33697.1"/>
    <property type="molecule type" value="Genomic_DNA"/>
</dbReference>
<dbReference type="EMBL" id="AE016958">
    <property type="protein sequence ID" value="AAS06898.1"/>
    <property type="molecule type" value="Genomic_DNA"/>
</dbReference>
<dbReference type="STRING" id="262316.MAP_4348c"/>
<dbReference type="KEGG" id="mpa:MAP_4348c"/>
<dbReference type="eggNOG" id="COG0759">
    <property type="taxonomic scope" value="Bacteria"/>
</dbReference>
<dbReference type="HOGENOM" id="CLU_144811_2_1_11"/>
<dbReference type="Proteomes" id="UP000000580">
    <property type="component" value="Chromosome"/>
</dbReference>
<dbReference type="GO" id="GO:0005886">
    <property type="term" value="C:plasma membrane"/>
    <property type="evidence" value="ECO:0007669"/>
    <property type="project" value="UniProtKB-SubCell"/>
</dbReference>
<dbReference type="HAMAP" id="MF_00386">
    <property type="entry name" value="UPF0161_YidD"/>
    <property type="match status" value="1"/>
</dbReference>
<dbReference type="InterPro" id="IPR002696">
    <property type="entry name" value="Membr_insert_effic_factor_YidD"/>
</dbReference>
<dbReference type="NCBIfam" id="TIGR00278">
    <property type="entry name" value="membrane protein insertion efficiency factor YidD"/>
    <property type="match status" value="1"/>
</dbReference>
<dbReference type="PANTHER" id="PTHR33383">
    <property type="entry name" value="MEMBRANE PROTEIN INSERTION EFFICIENCY FACTOR-RELATED"/>
    <property type="match status" value="1"/>
</dbReference>
<dbReference type="PANTHER" id="PTHR33383:SF1">
    <property type="entry name" value="MEMBRANE PROTEIN INSERTION EFFICIENCY FACTOR-RELATED"/>
    <property type="match status" value="1"/>
</dbReference>
<dbReference type="Pfam" id="PF01809">
    <property type="entry name" value="YidD"/>
    <property type="match status" value="1"/>
</dbReference>
<dbReference type="SMART" id="SM01234">
    <property type="entry name" value="Haemolytic"/>
    <property type="match status" value="1"/>
</dbReference>
<proteinExistence type="inferred from homology"/>
<name>YIDD_MYCPA</name>
<feature type="chain" id="PRO_0000171840" description="Putative membrane protein insertion efficiency factor">
    <location>
        <begin position="1"/>
        <end position="115"/>
    </location>
</feature>
<protein>
    <recommendedName>
        <fullName evidence="1">Putative membrane protein insertion efficiency factor</fullName>
    </recommendedName>
</protein>
<reference key="1">
    <citation type="journal article" date="2003" name="BMC Microbiol.">
        <title>Genomic homogeneity between Mycobacterium avium subsp. avium and Mycobacterium avium subsp. paratuberculosis belies their divergent growth rates.</title>
        <authorList>
            <person name="Bannantine J.P."/>
            <person name="Zhang Q."/>
            <person name="Li L.L."/>
            <person name="Kapur V."/>
        </authorList>
    </citation>
    <scope>NUCLEOTIDE SEQUENCE [GENOMIC DNA]</scope>
    <source>
        <strain>ATCC BAA-968 / K-10</strain>
    </source>
</reference>
<reference key="2">
    <citation type="journal article" date="2005" name="Proc. Natl. Acad. Sci. U.S.A.">
        <title>The complete genome sequence of Mycobacterium avium subspecies paratuberculosis.</title>
        <authorList>
            <person name="Li L."/>
            <person name="Bannantine J.P."/>
            <person name="Zhang Q."/>
            <person name="Amonsin A."/>
            <person name="May B.J."/>
            <person name="Alt D."/>
            <person name="Banerji N."/>
            <person name="Kanjilal S."/>
            <person name="Kapur V."/>
        </authorList>
    </citation>
    <scope>NUCLEOTIDE SEQUENCE [LARGE SCALE GENOMIC DNA]</scope>
    <source>
        <strain>ATCC BAA-968 / K-10</strain>
    </source>
</reference>
<keyword id="KW-1003">Cell membrane</keyword>
<keyword id="KW-0472">Membrane</keyword>
<keyword id="KW-1185">Reference proteome</keyword>
<sequence length="115" mass="12396">MTGPARSGAAIRGAGRTVARGLIFLIQLYRHMVSPLRPATCRFVPTCSQYAVDALDEYGLIRGSWLAAARLAKCGPWHQGGWDPIPERPGCRVNCQDASDAWAVRATRGESGSLV</sequence>
<gene>
    <name type="ordered locus">MAP_4348c</name>
</gene>